<evidence type="ECO:0000255" key="1">
    <source>
        <dbReference type="HAMAP-Rule" id="MF_01043"/>
    </source>
</evidence>
<organism>
    <name type="scientific">Acaryochloris marina (strain MBIC 11017)</name>
    <dbReference type="NCBI Taxonomy" id="329726"/>
    <lineage>
        <taxon>Bacteria</taxon>
        <taxon>Bacillati</taxon>
        <taxon>Cyanobacteriota</taxon>
        <taxon>Cyanophyceae</taxon>
        <taxon>Acaryochloridales</taxon>
        <taxon>Acaryochloridaceae</taxon>
        <taxon>Acaryochloris</taxon>
    </lineage>
</organism>
<proteinExistence type="inferred from homology"/>
<comment type="function">
    <text evidence="1">Catalyzes the transfer of an acyl group from acyl-phosphate (acyl-PO(4)) to glycerol-3-phosphate (G3P) to form lysophosphatidic acid (LPA). This enzyme utilizes acyl-phosphate as fatty acyl donor, but not acyl-CoA or acyl-ACP.</text>
</comment>
<comment type="catalytic activity">
    <reaction evidence="1">
        <text>an acyl phosphate + sn-glycerol 3-phosphate = a 1-acyl-sn-glycero-3-phosphate + phosphate</text>
        <dbReference type="Rhea" id="RHEA:34075"/>
        <dbReference type="ChEBI" id="CHEBI:43474"/>
        <dbReference type="ChEBI" id="CHEBI:57597"/>
        <dbReference type="ChEBI" id="CHEBI:57970"/>
        <dbReference type="ChEBI" id="CHEBI:59918"/>
        <dbReference type="EC" id="2.3.1.275"/>
    </reaction>
</comment>
<comment type="pathway">
    <text evidence="1">Lipid metabolism; phospholipid metabolism.</text>
</comment>
<comment type="subunit">
    <text evidence="1">Probably interacts with PlsX.</text>
</comment>
<comment type="subcellular location">
    <subcellularLocation>
        <location evidence="1">Cell inner membrane</location>
        <topology evidence="1">Multi-pass membrane protein</topology>
    </subcellularLocation>
</comment>
<comment type="similarity">
    <text evidence="1">Belongs to the PlsY family.</text>
</comment>
<keyword id="KW-0997">Cell inner membrane</keyword>
<keyword id="KW-1003">Cell membrane</keyword>
<keyword id="KW-0444">Lipid biosynthesis</keyword>
<keyword id="KW-0443">Lipid metabolism</keyword>
<keyword id="KW-0472">Membrane</keyword>
<keyword id="KW-0594">Phospholipid biosynthesis</keyword>
<keyword id="KW-1208">Phospholipid metabolism</keyword>
<keyword id="KW-1185">Reference proteome</keyword>
<keyword id="KW-0808">Transferase</keyword>
<keyword id="KW-0812">Transmembrane</keyword>
<keyword id="KW-1133">Transmembrane helix</keyword>
<protein>
    <recommendedName>
        <fullName evidence="1">Glycerol-3-phosphate acyltransferase</fullName>
    </recommendedName>
    <alternativeName>
        <fullName evidence="1">Acyl-PO4 G3P acyltransferase</fullName>
    </alternativeName>
    <alternativeName>
        <fullName evidence="1">Acyl-phosphate--glycerol-3-phosphate acyltransferase</fullName>
    </alternativeName>
    <alternativeName>
        <fullName evidence="1">G3P acyltransferase</fullName>
        <shortName evidence="1">GPAT</shortName>
        <ecNumber evidence="1">2.3.1.275</ecNumber>
    </alternativeName>
    <alternativeName>
        <fullName evidence="1">Lysophosphatidic acid synthase</fullName>
        <shortName evidence="1">LPA synthase</shortName>
    </alternativeName>
</protein>
<accession>B0CCQ8</accession>
<feature type="chain" id="PRO_1000084373" description="Glycerol-3-phosphate acyltransferase">
    <location>
        <begin position="1"/>
        <end position="225"/>
    </location>
</feature>
<feature type="transmembrane region" description="Helical" evidence="1">
    <location>
        <begin position="1"/>
        <end position="21"/>
    </location>
</feature>
<feature type="transmembrane region" description="Helical" evidence="1">
    <location>
        <begin position="56"/>
        <end position="76"/>
    </location>
</feature>
<feature type="transmembrane region" description="Helical" evidence="1">
    <location>
        <begin position="95"/>
        <end position="115"/>
    </location>
</feature>
<feature type="transmembrane region" description="Helical" evidence="1">
    <location>
        <begin position="134"/>
        <end position="154"/>
    </location>
</feature>
<feature type="transmembrane region" description="Helical" evidence="1">
    <location>
        <begin position="159"/>
        <end position="178"/>
    </location>
</feature>
<feature type="transmembrane region" description="Helical" evidence="1">
    <location>
        <begin position="182"/>
        <end position="201"/>
    </location>
</feature>
<reference key="1">
    <citation type="journal article" date="2008" name="Proc. Natl. Acad. Sci. U.S.A.">
        <title>Niche adaptation and genome expansion in the chlorophyll d-producing cyanobacterium Acaryochloris marina.</title>
        <authorList>
            <person name="Swingley W.D."/>
            <person name="Chen M."/>
            <person name="Cheung P.C."/>
            <person name="Conrad A.L."/>
            <person name="Dejesa L.C."/>
            <person name="Hao J."/>
            <person name="Honchak B.M."/>
            <person name="Karbach L.E."/>
            <person name="Kurdoglu A."/>
            <person name="Lahiri S."/>
            <person name="Mastrian S.D."/>
            <person name="Miyashita H."/>
            <person name="Page L."/>
            <person name="Ramakrishna P."/>
            <person name="Satoh S."/>
            <person name="Sattley W.M."/>
            <person name="Shimada Y."/>
            <person name="Taylor H.L."/>
            <person name="Tomo T."/>
            <person name="Tsuchiya T."/>
            <person name="Wang Z.T."/>
            <person name="Raymond J."/>
            <person name="Mimuro M."/>
            <person name="Blankenship R.E."/>
            <person name="Touchman J.W."/>
        </authorList>
    </citation>
    <scope>NUCLEOTIDE SEQUENCE [LARGE SCALE GENOMIC DNA]</scope>
    <source>
        <strain>MBIC 11017</strain>
    </source>
</reference>
<dbReference type="EC" id="2.3.1.275" evidence="1"/>
<dbReference type="EMBL" id="CP000828">
    <property type="protein sequence ID" value="ABW29220.1"/>
    <property type="molecule type" value="Genomic_DNA"/>
</dbReference>
<dbReference type="RefSeq" id="WP_012164551.1">
    <property type="nucleotide sequence ID" value="NC_009925.1"/>
</dbReference>
<dbReference type="SMR" id="B0CCQ8"/>
<dbReference type="STRING" id="329726.AM1_4240"/>
<dbReference type="KEGG" id="amr:AM1_4240"/>
<dbReference type="eggNOG" id="COG0344">
    <property type="taxonomic scope" value="Bacteria"/>
</dbReference>
<dbReference type="HOGENOM" id="CLU_081254_7_1_3"/>
<dbReference type="OrthoDB" id="9777124at2"/>
<dbReference type="UniPathway" id="UPA00085"/>
<dbReference type="Proteomes" id="UP000000268">
    <property type="component" value="Chromosome"/>
</dbReference>
<dbReference type="GO" id="GO:0005886">
    <property type="term" value="C:plasma membrane"/>
    <property type="evidence" value="ECO:0007669"/>
    <property type="project" value="UniProtKB-SubCell"/>
</dbReference>
<dbReference type="GO" id="GO:0043772">
    <property type="term" value="F:acyl-phosphate glycerol-3-phosphate acyltransferase activity"/>
    <property type="evidence" value="ECO:0007669"/>
    <property type="project" value="UniProtKB-UniRule"/>
</dbReference>
<dbReference type="GO" id="GO:0008654">
    <property type="term" value="P:phospholipid biosynthetic process"/>
    <property type="evidence" value="ECO:0007669"/>
    <property type="project" value="UniProtKB-UniRule"/>
</dbReference>
<dbReference type="HAMAP" id="MF_01043">
    <property type="entry name" value="PlsY"/>
    <property type="match status" value="1"/>
</dbReference>
<dbReference type="InterPro" id="IPR003811">
    <property type="entry name" value="G3P_acylTferase_PlsY"/>
</dbReference>
<dbReference type="NCBIfam" id="TIGR00023">
    <property type="entry name" value="glycerol-3-phosphate 1-O-acyltransferase PlsY"/>
    <property type="match status" value="1"/>
</dbReference>
<dbReference type="PANTHER" id="PTHR30309:SF0">
    <property type="entry name" value="GLYCEROL-3-PHOSPHATE ACYLTRANSFERASE-RELATED"/>
    <property type="match status" value="1"/>
</dbReference>
<dbReference type="PANTHER" id="PTHR30309">
    <property type="entry name" value="INNER MEMBRANE PROTEIN YGIH"/>
    <property type="match status" value="1"/>
</dbReference>
<dbReference type="Pfam" id="PF02660">
    <property type="entry name" value="G3P_acyltransf"/>
    <property type="match status" value="1"/>
</dbReference>
<dbReference type="SMART" id="SM01207">
    <property type="entry name" value="G3P_acyltransf"/>
    <property type="match status" value="1"/>
</dbReference>
<gene>
    <name evidence="1" type="primary">plsY</name>
    <name type="ordered locus">AM1_4240</name>
</gene>
<sequence>MAIWLLCNGVLLIVAYFLGSFPTGYLLGKALQGIDIREHGSKSTGATNVLRTLGKGPGLATLGVDICKGAGAVALVRWAYGNPMFLTQAPATTNIGLWLSLVVIMAGLMAILGHSKSVWLNFTGGKSVATGLGVLLVMSWTVGLAALGIFALVVSLSRIVSLSSISAAISLPVLMFVAKEPLAYVLFSITAGVYVVWRHWANIQRLLAGTEPRLGQKKAVSTDAT</sequence>
<name>PLSY_ACAM1</name>